<sequence>MAVRFIREDGDEILRKVSKKVDVIDERIKTLLDDMAETMYAANGVGLAAPQVGVLKRVVVIDVGDGLMELINPEIVEQEGEQIDIEGCLSIPGVAGEVKRPARVVVEALNREGEKITVEGKELLAVALCHEIDHLDGILFTDKVIRFIDEDEMERRRENKRRNKIRQNKG</sequence>
<keyword id="KW-0378">Hydrolase</keyword>
<keyword id="KW-0408">Iron</keyword>
<keyword id="KW-0479">Metal-binding</keyword>
<keyword id="KW-0648">Protein biosynthesis</keyword>
<keyword id="KW-1185">Reference proteome</keyword>
<reference key="1">
    <citation type="submission" date="2007-02" db="EMBL/GenBank/DDBJ databases">
        <title>Complete sequence of Clostridium thermocellum ATCC 27405.</title>
        <authorList>
            <consortium name="US DOE Joint Genome Institute"/>
            <person name="Copeland A."/>
            <person name="Lucas S."/>
            <person name="Lapidus A."/>
            <person name="Barry K."/>
            <person name="Detter J.C."/>
            <person name="Glavina del Rio T."/>
            <person name="Hammon N."/>
            <person name="Israni S."/>
            <person name="Dalin E."/>
            <person name="Tice H."/>
            <person name="Pitluck S."/>
            <person name="Chertkov O."/>
            <person name="Brettin T."/>
            <person name="Bruce D."/>
            <person name="Han C."/>
            <person name="Tapia R."/>
            <person name="Gilna P."/>
            <person name="Schmutz J."/>
            <person name="Larimer F."/>
            <person name="Land M."/>
            <person name="Hauser L."/>
            <person name="Kyrpides N."/>
            <person name="Mikhailova N."/>
            <person name="Wu J.H.D."/>
            <person name="Newcomb M."/>
            <person name="Richardson P."/>
        </authorList>
    </citation>
    <scope>NUCLEOTIDE SEQUENCE [LARGE SCALE GENOMIC DNA]</scope>
    <source>
        <strain>ATCC 27405 / DSM 1237 / JCM 9322 / NBRC 103400 / NCIMB 10682 / NRRL B-4536 / VPI 7372</strain>
    </source>
</reference>
<gene>
    <name evidence="1" type="primary">def</name>
    <name type="ordered locus">Cthe_0567</name>
</gene>
<organism>
    <name type="scientific">Acetivibrio thermocellus (strain ATCC 27405 / DSM 1237 / JCM 9322 / NBRC 103400 / NCIMB 10682 / NRRL B-4536 / VPI 7372)</name>
    <name type="common">Clostridium thermocellum</name>
    <dbReference type="NCBI Taxonomy" id="203119"/>
    <lineage>
        <taxon>Bacteria</taxon>
        <taxon>Bacillati</taxon>
        <taxon>Bacillota</taxon>
        <taxon>Clostridia</taxon>
        <taxon>Eubacteriales</taxon>
        <taxon>Oscillospiraceae</taxon>
        <taxon>Acetivibrio</taxon>
    </lineage>
</organism>
<accession>A3DCX4</accession>
<dbReference type="EC" id="3.5.1.88" evidence="1"/>
<dbReference type="EMBL" id="CP000568">
    <property type="protein sequence ID" value="ABN51803.1"/>
    <property type="molecule type" value="Genomic_DNA"/>
</dbReference>
<dbReference type="RefSeq" id="WP_003517641.1">
    <property type="nucleotide sequence ID" value="NC_009012.1"/>
</dbReference>
<dbReference type="SMR" id="A3DCX4"/>
<dbReference type="STRING" id="203119.Cthe_0567"/>
<dbReference type="GeneID" id="35803143"/>
<dbReference type="KEGG" id="cth:Cthe_0567"/>
<dbReference type="eggNOG" id="COG0242">
    <property type="taxonomic scope" value="Bacteria"/>
</dbReference>
<dbReference type="HOGENOM" id="CLU_061901_4_2_9"/>
<dbReference type="OrthoDB" id="9784988at2"/>
<dbReference type="Proteomes" id="UP000002145">
    <property type="component" value="Chromosome"/>
</dbReference>
<dbReference type="GO" id="GO:0046872">
    <property type="term" value="F:metal ion binding"/>
    <property type="evidence" value="ECO:0007669"/>
    <property type="project" value="UniProtKB-KW"/>
</dbReference>
<dbReference type="GO" id="GO:0042586">
    <property type="term" value="F:peptide deformylase activity"/>
    <property type="evidence" value="ECO:0007669"/>
    <property type="project" value="UniProtKB-UniRule"/>
</dbReference>
<dbReference type="GO" id="GO:0043686">
    <property type="term" value="P:co-translational protein modification"/>
    <property type="evidence" value="ECO:0007669"/>
    <property type="project" value="TreeGrafter"/>
</dbReference>
<dbReference type="GO" id="GO:0006412">
    <property type="term" value="P:translation"/>
    <property type="evidence" value="ECO:0007669"/>
    <property type="project" value="UniProtKB-UniRule"/>
</dbReference>
<dbReference type="CDD" id="cd00487">
    <property type="entry name" value="Pep_deformylase"/>
    <property type="match status" value="1"/>
</dbReference>
<dbReference type="FunFam" id="3.90.45.10:FF:000005">
    <property type="entry name" value="Peptide deformylase"/>
    <property type="match status" value="1"/>
</dbReference>
<dbReference type="Gene3D" id="3.90.45.10">
    <property type="entry name" value="Peptide deformylase"/>
    <property type="match status" value="1"/>
</dbReference>
<dbReference type="HAMAP" id="MF_00163">
    <property type="entry name" value="Pep_deformylase"/>
    <property type="match status" value="1"/>
</dbReference>
<dbReference type="InterPro" id="IPR023635">
    <property type="entry name" value="Peptide_deformylase"/>
</dbReference>
<dbReference type="InterPro" id="IPR036821">
    <property type="entry name" value="Peptide_deformylase_sf"/>
</dbReference>
<dbReference type="NCBIfam" id="TIGR00079">
    <property type="entry name" value="pept_deformyl"/>
    <property type="match status" value="1"/>
</dbReference>
<dbReference type="NCBIfam" id="NF001159">
    <property type="entry name" value="PRK00150.1-3"/>
    <property type="match status" value="1"/>
</dbReference>
<dbReference type="PANTHER" id="PTHR10458">
    <property type="entry name" value="PEPTIDE DEFORMYLASE"/>
    <property type="match status" value="1"/>
</dbReference>
<dbReference type="PANTHER" id="PTHR10458:SF22">
    <property type="entry name" value="PEPTIDE DEFORMYLASE"/>
    <property type="match status" value="1"/>
</dbReference>
<dbReference type="Pfam" id="PF01327">
    <property type="entry name" value="Pep_deformylase"/>
    <property type="match status" value="1"/>
</dbReference>
<dbReference type="PIRSF" id="PIRSF004749">
    <property type="entry name" value="Pep_def"/>
    <property type="match status" value="1"/>
</dbReference>
<dbReference type="PRINTS" id="PR01576">
    <property type="entry name" value="PDEFORMYLASE"/>
</dbReference>
<dbReference type="SUPFAM" id="SSF56420">
    <property type="entry name" value="Peptide deformylase"/>
    <property type="match status" value="1"/>
</dbReference>
<name>DEF_ACET2</name>
<protein>
    <recommendedName>
        <fullName evidence="1">Peptide deformylase</fullName>
        <shortName evidence="1">PDF</shortName>
        <ecNumber evidence="1">3.5.1.88</ecNumber>
    </recommendedName>
    <alternativeName>
        <fullName evidence="1">Polypeptide deformylase</fullName>
    </alternativeName>
</protein>
<comment type="function">
    <text evidence="1">Removes the formyl group from the N-terminal Met of newly synthesized proteins. Requires at least a dipeptide for an efficient rate of reaction. N-terminal L-methionine is a prerequisite for activity but the enzyme has broad specificity at other positions.</text>
</comment>
<comment type="catalytic activity">
    <reaction evidence="1">
        <text>N-terminal N-formyl-L-methionyl-[peptide] + H2O = N-terminal L-methionyl-[peptide] + formate</text>
        <dbReference type="Rhea" id="RHEA:24420"/>
        <dbReference type="Rhea" id="RHEA-COMP:10639"/>
        <dbReference type="Rhea" id="RHEA-COMP:10640"/>
        <dbReference type="ChEBI" id="CHEBI:15377"/>
        <dbReference type="ChEBI" id="CHEBI:15740"/>
        <dbReference type="ChEBI" id="CHEBI:49298"/>
        <dbReference type="ChEBI" id="CHEBI:64731"/>
        <dbReference type="EC" id="3.5.1.88"/>
    </reaction>
</comment>
<comment type="cofactor">
    <cofactor evidence="1">
        <name>Fe(2+)</name>
        <dbReference type="ChEBI" id="CHEBI:29033"/>
    </cofactor>
    <text evidence="1">Binds 1 Fe(2+) ion.</text>
</comment>
<comment type="similarity">
    <text evidence="1">Belongs to the polypeptide deformylase family.</text>
</comment>
<proteinExistence type="inferred from homology"/>
<feature type="chain" id="PRO_0000301021" description="Peptide deformylase">
    <location>
        <begin position="1"/>
        <end position="170"/>
    </location>
</feature>
<feature type="active site" evidence="1">
    <location>
        <position position="131"/>
    </location>
</feature>
<feature type="binding site" evidence="1">
    <location>
        <position position="88"/>
    </location>
    <ligand>
        <name>Fe cation</name>
        <dbReference type="ChEBI" id="CHEBI:24875"/>
    </ligand>
</feature>
<feature type="binding site" evidence="1">
    <location>
        <position position="130"/>
    </location>
    <ligand>
        <name>Fe cation</name>
        <dbReference type="ChEBI" id="CHEBI:24875"/>
    </ligand>
</feature>
<feature type="binding site" evidence="1">
    <location>
        <position position="134"/>
    </location>
    <ligand>
        <name>Fe cation</name>
        <dbReference type="ChEBI" id="CHEBI:24875"/>
    </ligand>
</feature>
<evidence type="ECO:0000255" key="1">
    <source>
        <dbReference type="HAMAP-Rule" id="MF_00163"/>
    </source>
</evidence>